<comment type="function">
    <text evidence="1">May function as an ATP-dependent RNA/DNA helicase.</text>
</comment>
<comment type="catalytic activity">
    <reaction evidence="8">
        <text>ATP + H2O = ADP + phosphate + H(+)</text>
        <dbReference type="Rhea" id="RHEA:13065"/>
        <dbReference type="ChEBI" id="CHEBI:15377"/>
        <dbReference type="ChEBI" id="CHEBI:15378"/>
        <dbReference type="ChEBI" id="CHEBI:30616"/>
        <dbReference type="ChEBI" id="CHEBI:43474"/>
        <dbReference type="ChEBI" id="CHEBI:456216"/>
        <dbReference type="EC" id="3.6.4.13"/>
    </reaction>
</comment>
<comment type="catalytic activity">
    <reaction evidence="8">
        <text>ATP + H2O = ADP + phosphate + H(+)</text>
        <dbReference type="Rhea" id="RHEA:13065"/>
        <dbReference type="ChEBI" id="CHEBI:15377"/>
        <dbReference type="ChEBI" id="CHEBI:15378"/>
        <dbReference type="ChEBI" id="CHEBI:30616"/>
        <dbReference type="ChEBI" id="CHEBI:43474"/>
        <dbReference type="ChEBI" id="CHEBI:456216"/>
        <dbReference type="EC" id="3.6.4.12"/>
    </reaction>
</comment>
<comment type="subcellular location">
    <subcellularLocation>
        <location evidence="7">Nucleus</location>
    </subcellularLocation>
</comment>
<comment type="tissue specificity">
    <text evidence="6">Specifically expressed in the tapetum and vascular tissues.</text>
</comment>
<comment type="similarity">
    <text evidence="8">Belongs to the DExH box helicase family.</text>
</comment>
<evidence type="ECO:0000250" key="1">
    <source>
        <dbReference type="UniProtKB" id="F4IDQ6"/>
    </source>
</evidence>
<evidence type="ECO:0000255" key="2">
    <source>
        <dbReference type="PROSITE-ProRule" id="PRU00382"/>
    </source>
</evidence>
<evidence type="ECO:0000255" key="3">
    <source>
        <dbReference type="PROSITE-ProRule" id="PRU00541"/>
    </source>
</evidence>
<evidence type="ECO:0000255" key="4">
    <source>
        <dbReference type="PROSITE-ProRule" id="PRU00542"/>
    </source>
</evidence>
<evidence type="ECO:0000256" key="5">
    <source>
        <dbReference type="SAM" id="MobiDB-lite"/>
    </source>
</evidence>
<evidence type="ECO:0000269" key="6">
    <source>
    </source>
</evidence>
<evidence type="ECO:0000303" key="7">
    <source>
    </source>
</evidence>
<evidence type="ECO:0000305" key="8"/>
<evidence type="ECO:0000312" key="9">
    <source>
        <dbReference type="Araport" id="AT2G30800"/>
    </source>
</evidence>
<evidence type="ECO:0000312" key="10">
    <source>
        <dbReference type="EMBL" id="AAB01660.1"/>
    </source>
</evidence>
<evidence type="ECO:0000312" key="11">
    <source>
        <dbReference type="EMBL" id="AAC20715.2"/>
    </source>
</evidence>
<evidence type="ECO:0000312" key="12">
    <source>
        <dbReference type="EMBL" id="AAM14828.1"/>
    </source>
</evidence>
<gene>
    <name evidence="7" type="primary">HVT1</name>
    <name evidence="9" type="ordered locus">At2g30800</name>
    <name evidence="11" type="ORF">F7F1.1</name>
    <name evidence="12" type="ORF">T11J7.19</name>
</gene>
<protein>
    <recommendedName>
        <fullName evidence="8">DExH-box ATP-dependent RNA helicase DExH6</fullName>
        <ecNumber evidence="8">3.6.4.13</ecNumber>
    </recommendedName>
    <alternativeName>
        <fullName evidence="7">Protein HELICASE IN VASCULAR TISSUE AND TAPETUM</fullName>
        <ecNumber evidence="8">3.6.4.12</ecNumber>
    </alternativeName>
</protein>
<accession>F4INY4</accession>
<accession>O80847</accession>
<accession>Q0WVL4</accession>
<accession>Q38800</accession>
<accession>Q8RYE1</accession>
<dbReference type="EC" id="3.6.4.13" evidence="8"/>
<dbReference type="EC" id="3.6.4.12" evidence="8"/>
<dbReference type="EMBL" id="U10245">
    <property type="protein sequence ID" value="AAB01660.1"/>
    <property type="molecule type" value="mRNA"/>
</dbReference>
<dbReference type="EMBL" id="AC002340">
    <property type="protein sequence ID" value="AAM14828.1"/>
    <property type="molecule type" value="Genomic_DNA"/>
</dbReference>
<dbReference type="EMBL" id="AC004669">
    <property type="protein sequence ID" value="AAC20715.2"/>
    <property type="molecule type" value="Genomic_DNA"/>
</dbReference>
<dbReference type="EMBL" id="CP002685">
    <property type="protein sequence ID" value="AEC08442.1"/>
    <property type="molecule type" value="Genomic_DNA"/>
</dbReference>
<dbReference type="EMBL" id="AK226731">
    <property type="protein sequence ID" value="BAE98834.1"/>
    <property type="molecule type" value="mRNA"/>
</dbReference>
<dbReference type="PIR" id="H84712">
    <property type="entry name" value="H84712"/>
</dbReference>
<dbReference type="RefSeq" id="NP_850154.2">
    <property type="nucleotide sequence ID" value="NM_179823.4"/>
</dbReference>
<dbReference type="SMR" id="F4INY4"/>
<dbReference type="FunCoup" id="F4INY4">
    <property type="interactions" value="3142"/>
</dbReference>
<dbReference type="STRING" id="3702.F4INY4"/>
<dbReference type="GlyGen" id="F4INY4">
    <property type="glycosylation" value="1 site"/>
</dbReference>
<dbReference type="iPTMnet" id="F4INY4"/>
<dbReference type="PaxDb" id="3702-AT2G30800.1"/>
<dbReference type="ProteomicsDB" id="232093"/>
<dbReference type="EnsemblPlants" id="AT2G30800.1">
    <property type="protein sequence ID" value="AT2G30800.1"/>
    <property type="gene ID" value="AT2G30800"/>
</dbReference>
<dbReference type="GeneID" id="817631"/>
<dbReference type="Gramene" id="AT2G30800.1">
    <property type="protein sequence ID" value="AT2G30800.1"/>
    <property type="gene ID" value="AT2G30800"/>
</dbReference>
<dbReference type="KEGG" id="ath:AT2G30800"/>
<dbReference type="Araport" id="AT2G30800"/>
<dbReference type="TAIR" id="AT2G30800">
    <property type="gene designation" value="HVT1"/>
</dbReference>
<dbReference type="eggNOG" id="KOG0920">
    <property type="taxonomic scope" value="Eukaryota"/>
</dbReference>
<dbReference type="HOGENOM" id="CLU_001832_1_6_1"/>
<dbReference type="InParanoid" id="F4INY4"/>
<dbReference type="OMA" id="MWSSKRE"/>
<dbReference type="OrthoDB" id="5600252at2759"/>
<dbReference type="PRO" id="PR:F4INY4"/>
<dbReference type="Proteomes" id="UP000006548">
    <property type="component" value="Chromosome 2"/>
</dbReference>
<dbReference type="ExpressionAtlas" id="F4INY4">
    <property type="expression patterns" value="baseline and differential"/>
</dbReference>
<dbReference type="GO" id="GO:0005634">
    <property type="term" value="C:nucleus"/>
    <property type="evidence" value="ECO:0000250"/>
    <property type="project" value="TAIR"/>
</dbReference>
<dbReference type="GO" id="GO:0005524">
    <property type="term" value="F:ATP binding"/>
    <property type="evidence" value="ECO:0007669"/>
    <property type="project" value="UniProtKB-KW"/>
</dbReference>
<dbReference type="GO" id="GO:0016887">
    <property type="term" value="F:ATP hydrolysis activity"/>
    <property type="evidence" value="ECO:0007669"/>
    <property type="project" value="RHEA"/>
</dbReference>
<dbReference type="GO" id="GO:0004386">
    <property type="term" value="F:helicase activity"/>
    <property type="evidence" value="ECO:0000250"/>
    <property type="project" value="TAIR"/>
</dbReference>
<dbReference type="GO" id="GO:0003723">
    <property type="term" value="F:RNA binding"/>
    <property type="evidence" value="ECO:0007669"/>
    <property type="project" value="UniProtKB-KW"/>
</dbReference>
<dbReference type="GO" id="GO:0003724">
    <property type="term" value="F:RNA helicase activity"/>
    <property type="evidence" value="ECO:0007669"/>
    <property type="project" value="UniProtKB-EC"/>
</dbReference>
<dbReference type="CDD" id="cd17917">
    <property type="entry name" value="DEXHc_RHA-like"/>
    <property type="match status" value="1"/>
</dbReference>
<dbReference type="CDD" id="cd06007">
    <property type="entry name" value="R3H_DEXH_helicase"/>
    <property type="match status" value="1"/>
</dbReference>
<dbReference type="CDD" id="cd18791">
    <property type="entry name" value="SF2_C_RHA"/>
    <property type="match status" value="1"/>
</dbReference>
<dbReference type="FunFam" id="3.40.50.300:FF:000526">
    <property type="entry name" value="DExH-box ATP-dependent RNA helicase DExH3"/>
    <property type="match status" value="1"/>
</dbReference>
<dbReference type="FunFam" id="1.20.120.1080:FF:000011">
    <property type="entry name" value="DExH-box ATP-dependent RNA helicase DExH6"/>
    <property type="match status" value="1"/>
</dbReference>
<dbReference type="FunFam" id="1.25.40.20:FF:000232">
    <property type="entry name" value="DExH-box ATP-dependent RNA helicase DExH6"/>
    <property type="match status" value="1"/>
</dbReference>
<dbReference type="FunFam" id="3.40.50.300:FF:000860">
    <property type="entry name" value="DExH-box ATP-dependent RNA helicase DExH6"/>
    <property type="match status" value="1"/>
</dbReference>
<dbReference type="FunFam" id="3.30.1370.50:FF:000002">
    <property type="entry name" value="Immunoglobulin mu DNA-binding protein 2"/>
    <property type="match status" value="1"/>
</dbReference>
<dbReference type="Gene3D" id="1.20.120.1080">
    <property type="match status" value="1"/>
</dbReference>
<dbReference type="Gene3D" id="1.25.40.20">
    <property type="entry name" value="Ankyrin repeat-containing domain"/>
    <property type="match status" value="1"/>
</dbReference>
<dbReference type="Gene3D" id="3.40.50.300">
    <property type="entry name" value="P-loop containing nucleotide triphosphate hydrolases"/>
    <property type="match status" value="2"/>
</dbReference>
<dbReference type="Gene3D" id="3.30.1370.50">
    <property type="entry name" value="R3H-like domain"/>
    <property type="match status" value="1"/>
</dbReference>
<dbReference type="InterPro" id="IPR036770">
    <property type="entry name" value="Ankyrin_rpt-contain_sf"/>
</dbReference>
<dbReference type="InterPro" id="IPR011709">
    <property type="entry name" value="DEAD-box_helicase_OB_fold"/>
</dbReference>
<dbReference type="InterPro" id="IPR011545">
    <property type="entry name" value="DEAD/DEAH_box_helicase_dom"/>
</dbReference>
<dbReference type="InterPro" id="IPR048333">
    <property type="entry name" value="HA2_WH"/>
</dbReference>
<dbReference type="InterPro" id="IPR007502">
    <property type="entry name" value="Helicase-assoc_dom"/>
</dbReference>
<dbReference type="InterPro" id="IPR014001">
    <property type="entry name" value="Helicase_ATP-bd"/>
</dbReference>
<dbReference type="InterPro" id="IPR001650">
    <property type="entry name" value="Helicase_C-like"/>
</dbReference>
<dbReference type="InterPro" id="IPR027417">
    <property type="entry name" value="P-loop_NTPase"/>
</dbReference>
<dbReference type="InterPro" id="IPR034083">
    <property type="entry name" value="R3H_DEXH_helicase"/>
</dbReference>
<dbReference type="InterPro" id="IPR001374">
    <property type="entry name" value="R3H_dom"/>
</dbReference>
<dbReference type="InterPro" id="IPR036867">
    <property type="entry name" value="R3H_dom_sf"/>
</dbReference>
<dbReference type="PANTHER" id="PTHR18934:SF213">
    <property type="entry name" value="3'-5' RNA HELICASE YTHDC2"/>
    <property type="match status" value="1"/>
</dbReference>
<dbReference type="PANTHER" id="PTHR18934">
    <property type="entry name" value="ATP-DEPENDENT RNA HELICASE"/>
    <property type="match status" value="1"/>
</dbReference>
<dbReference type="Pfam" id="PF00270">
    <property type="entry name" value="DEAD"/>
    <property type="match status" value="1"/>
</dbReference>
<dbReference type="Pfam" id="PF21010">
    <property type="entry name" value="HA2_C"/>
    <property type="match status" value="1"/>
</dbReference>
<dbReference type="Pfam" id="PF04408">
    <property type="entry name" value="HA2_N"/>
    <property type="match status" value="1"/>
</dbReference>
<dbReference type="Pfam" id="PF00271">
    <property type="entry name" value="Helicase_C"/>
    <property type="match status" value="1"/>
</dbReference>
<dbReference type="Pfam" id="PF07717">
    <property type="entry name" value="OB_NTP_bind"/>
    <property type="match status" value="1"/>
</dbReference>
<dbReference type="Pfam" id="PF01424">
    <property type="entry name" value="R3H"/>
    <property type="match status" value="1"/>
</dbReference>
<dbReference type="SMART" id="SM00487">
    <property type="entry name" value="DEXDc"/>
    <property type="match status" value="1"/>
</dbReference>
<dbReference type="SMART" id="SM00847">
    <property type="entry name" value="HA2"/>
    <property type="match status" value="1"/>
</dbReference>
<dbReference type="SMART" id="SM00490">
    <property type="entry name" value="HELICc"/>
    <property type="match status" value="1"/>
</dbReference>
<dbReference type="SMART" id="SM00393">
    <property type="entry name" value="R3H"/>
    <property type="match status" value="1"/>
</dbReference>
<dbReference type="SUPFAM" id="SSF48403">
    <property type="entry name" value="Ankyrin repeat"/>
    <property type="match status" value="1"/>
</dbReference>
<dbReference type="SUPFAM" id="SSF52540">
    <property type="entry name" value="P-loop containing nucleoside triphosphate hydrolases"/>
    <property type="match status" value="1"/>
</dbReference>
<dbReference type="SUPFAM" id="SSF82708">
    <property type="entry name" value="R3H domain"/>
    <property type="match status" value="1"/>
</dbReference>
<dbReference type="PROSITE" id="PS51192">
    <property type="entry name" value="HELICASE_ATP_BIND_1"/>
    <property type="match status" value="1"/>
</dbReference>
<dbReference type="PROSITE" id="PS51194">
    <property type="entry name" value="HELICASE_CTER"/>
    <property type="match status" value="1"/>
</dbReference>
<dbReference type="PROSITE" id="PS51061">
    <property type="entry name" value="R3H"/>
    <property type="match status" value="1"/>
</dbReference>
<keyword id="KW-0067">ATP-binding</keyword>
<keyword id="KW-0347">Helicase</keyword>
<keyword id="KW-0378">Hydrolase</keyword>
<keyword id="KW-0547">Nucleotide-binding</keyword>
<keyword id="KW-0539">Nucleus</keyword>
<keyword id="KW-1185">Reference proteome</keyword>
<keyword id="KW-0694">RNA-binding</keyword>
<name>HVT1_ARATH</name>
<feature type="chain" id="PRO_0000435296" description="DExH-box ATP-dependent RNA helicase DExH6">
    <location>
        <begin position="1"/>
        <end position="1299"/>
    </location>
</feature>
<feature type="domain" description="R3H" evidence="2">
    <location>
        <begin position="15"/>
        <end position="82"/>
    </location>
</feature>
<feature type="domain" description="Helicase ATP-binding" evidence="3">
    <location>
        <begin position="197"/>
        <end position="366"/>
    </location>
</feature>
<feature type="domain" description="Helicase C-terminal" evidence="4">
    <location>
        <begin position="537"/>
        <end position="711"/>
    </location>
</feature>
<feature type="region of interest" description="Disordered" evidence="5">
    <location>
        <begin position="987"/>
        <end position="1039"/>
    </location>
</feature>
<feature type="region of interest" description="Disordered" evidence="5">
    <location>
        <begin position="1175"/>
        <end position="1299"/>
    </location>
</feature>
<feature type="short sequence motif" description="DEIH box" evidence="8">
    <location>
        <begin position="313"/>
        <end position="316"/>
    </location>
</feature>
<feature type="short sequence motif" description="Bipartite nuclear localization signal" evidence="7">
    <location>
        <begin position="1182"/>
        <end position="1200"/>
    </location>
</feature>
<feature type="short sequence motif" description="Bipartite nuclear localization signal" evidence="7">
    <location>
        <begin position="1267"/>
        <end position="1283"/>
    </location>
</feature>
<feature type="compositionally biased region" description="Acidic residues" evidence="5">
    <location>
        <begin position="992"/>
        <end position="1006"/>
    </location>
</feature>
<feature type="compositionally biased region" description="Low complexity" evidence="5">
    <location>
        <begin position="1007"/>
        <end position="1020"/>
    </location>
</feature>
<feature type="compositionally biased region" description="Basic and acidic residues" evidence="5">
    <location>
        <begin position="1023"/>
        <end position="1032"/>
    </location>
</feature>
<feature type="compositionally biased region" description="Polar residues" evidence="5">
    <location>
        <begin position="1176"/>
        <end position="1193"/>
    </location>
</feature>
<feature type="compositionally biased region" description="Polar residues" evidence="5">
    <location>
        <begin position="1204"/>
        <end position="1214"/>
    </location>
</feature>
<feature type="compositionally biased region" description="Polar residues" evidence="5">
    <location>
        <begin position="1239"/>
        <end position="1251"/>
    </location>
</feature>
<feature type="compositionally biased region" description="Basic and acidic residues" evidence="5">
    <location>
        <begin position="1279"/>
        <end position="1299"/>
    </location>
</feature>
<feature type="binding site" evidence="3">
    <location>
        <begin position="210"/>
        <end position="217"/>
    </location>
    <ligand>
        <name>ATP</name>
        <dbReference type="ChEBI" id="CHEBI:30616"/>
    </ligand>
</feature>
<feature type="sequence conflict" description="In Ref. 1; AAB01660." evidence="8" ref="1">
    <original>VAANTNEEV</original>
    <variation>A</variation>
    <location>
        <begin position="1006"/>
        <end position="1014"/>
    </location>
</feature>
<feature type="sequence conflict" description="In Ref. 1; AAB01660." evidence="8" ref="1">
    <original>H</original>
    <variation>P</variation>
    <location>
        <position position="1156"/>
    </location>
</feature>
<proteinExistence type="evidence at transcript level"/>
<organism>
    <name type="scientific">Arabidopsis thaliana</name>
    <name type="common">Mouse-ear cress</name>
    <dbReference type="NCBI Taxonomy" id="3702"/>
    <lineage>
        <taxon>Eukaryota</taxon>
        <taxon>Viridiplantae</taxon>
        <taxon>Streptophyta</taxon>
        <taxon>Embryophyta</taxon>
        <taxon>Tracheophyta</taxon>
        <taxon>Spermatophyta</taxon>
        <taxon>Magnoliopsida</taxon>
        <taxon>eudicotyledons</taxon>
        <taxon>Gunneridae</taxon>
        <taxon>Pentapetalae</taxon>
        <taxon>rosids</taxon>
        <taxon>malvids</taxon>
        <taxon>Brassicales</taxon>
        <taxon>Brassicaceae</taxon>
        <taxon>Camelineae</taxon>
        <taxon>Arabidopsis</taxon>
    </lineage>
</organism>
<reference key="1">
    <citation type="journal article" date="1997" name="Plant J.">
        <title>A novel nucleic acid helicase gene identified by promoter trapping in Arabidopsis.</title>
        <authorList>
            <person name="Wei W."/>
            <person name="Twell D."/>
            <person name="Lindsey K."/>
        </authorList>
    </citation>
    <scope>NUCLEOTIDE SEQUENCE [MRNA]</scope>
    <scope>TISSUE SPECIFICITY</scope>
    <source>
        <strain evidence="10">cv. Columbia</strain>
        <tissue evidence="10">Aerial part</tissue>
    </source>
</reference>
<reference key="2">
    <citation type="journal article" date="1999" name="Nature">
        <title>Sequence and analysis of chromosome 2 of the plant Arabidopsis thaliana.</title>
        <authorList>
            <person name="Lin X."/>
            <person name="Kaul S."/>
            <person name="Rounsley S.D."/>
            <person name="Shea T.P."/>
            <person name="Benito M.-I."/>
            <person name="Town C.D."/>
            <person name="Fujii C.Y."/>
            <person name="Mason T.M."/>
            <person name="Bowman C.L."/>
            <person name="Barnstead M.E."/>
            <person name="Feldblyum T.V."/>
            <person name="Buell C.R."/>
            <person name="Ketchum K.A."/>
            <person name="Lee J.J."/>
            <person name="Ronning C.M."/>
            <person name="Koo H.L."/>
            <person name="Moffat K.S."/>
            <person name="Cronin L.A."/>
            <person name="Shen M."/>
            <person name="Pai G."/>
            <person name="Van Aken S."/>
            <person name="Umayam L."/>
            <person name="Tallon L.J."/>
            <person name="Gill J.E."/>
            <person name="Adams M.D."/>
            <person name="Carrera A.J."/>
            <person name="Creasy T.H."/>
            <person name="Goodman H.M."/>
            <person name="Somerville C.R."/>
            <person name="Copenhaver G.P."/>
            <person name="Preuss D."/>
            <person name="Nierman W.C."/>
            <person name="White O."/>
            <person name="Eisen J.A."/>
            <person name="Salzberg S.L."/>
            <person name="Fraser C.M."/>
            <person name="Venter J.C."/>
        </authorList>
    </citation>
    <scope>NUCLEOTIDE SEQUENCE [LARGE SCALE GENOMIC DNA]</scope>
    <source>
        <strain>cv. Columbia</strain>
    </source>
</reference>
<reference key="3">
    <citation type="journal article" date="2017" name="Plant J.">
        <title>Araport11: a complete reannotation of the Arabidopsis thaliana reference genome.</title>
        <authorList>
            <person name="Cheng C.Y."/>
            <person name="Krishnakumar V."/>
            <person name="Chan A.P."/>
            <person name="Thibaud-Nissen F."/>
            <person name="Schobel S."/>
            <person name="Town C.D."/>
        </authorList>
    </citation>
    <scope>GENOME REANNOTATION</scope>
    <source>
        <strain>cv. Columbia</strain>
    </source>
</reference>
<reference key="4">
    <citation type="submission" date="2006-07" db="EMBL/GenBank/DDBJ databases">
        <title>Large-scale analysis of RIKEN Arabidopsis full-length (RAFL) cDNAs.</title>
        <authorList>
            <person name="Totoki Y."/>
            <person name="Seki M."/>
            <person name="Ishida J."/>
            <person name="Nakajima M."/>
            <person name="Enju A."/>
            <person name="Kamiya A."/>
            <person name="Narusaka M."/>
            <person name="Shin-i T."/>
            <person name="Nakagawa M."/>
            <person name="Sakamoto N."/>
            <person name="Oishi K."/>
            <person name="Kohara Y."/>
            <person name="Kobayashi M."/>
            <person name="Toyoda A."/>
            <person name="Sakaki Y."/>
            <person name="Sakurai T."/>
            <person name="Iida K."/>
            <person name="Akiyama K."/>
            <person name="Satou M."/>
            <person name="Toyoda T."/>
            <person name="Konagaya A."/>
            <person name="Carninci P."/>
            <person name="Kawai J."/>
            <person name="Hayashizaki Y."/>
            <person name="Shinozaki K."/>
        </authorList>
    </citation>
    <scope>NUCLEOTIDE SEQUENCE [LARGE SCALE MRNA] OF 1-636</scope>
    <source>
        <strain>cv. Columbia</strain>
    </source>
</reference>
<reference key="5">
    <citation type="journal article" date="2013" name="PLoS ONE">
        <title>Genome-wide comparative in silico analysis of the RNA helicase gene family in Zea mays and Glycine max: a comparison with Arabidopsis and Oryza sativa.</title>
        <authorList>
            <person name="Xu R."/>
            <person name="Zhang S."/>
            <person name="Huang J."/>
            <person name="Zheng C."/>
        </authorList>
    </citation>
    <scope>GENE FAMILY</scope>
</reference>
<sequence>MGNKRFRSDNNAGKPTSVEATRIWATKVIEDFRASGNEVYTFEHNLSNNERGVIHQMCRKMGIQSKSSGRGEQRRLSIFKSRHKNGNKNEANEKSNKEKLKCVSFPPGADVILQELFTHYPPCDGDTAATSFTKYSGNKGKQGQWKDDFFRKPQISSEEILEKVASLSSRLKKDKALKEITKLRSKLPITSFKDAITSAVESNQVILISGETGCGKTTQVPQYLLDHMWSSKRETCKIVCTQPRRISAMSVSERISCERGESIGENIGYKVRLQSKGGRHSSVVFCTNGILLRVLVGKGSVSSVSDITHIIVDEIHERDCYSDFMLAIIRDLLPSNPHLRLILMSATLDAERFSGYFGGCPVVRVPGFTYPVRTLYLEDVLSILKSGGDNHLSSTNLSISDHKLDLTDEDKLALDEAIILAWTNDEFDALLDLVSSRGSHEIYNYQHQSTWLTPLMVFAGKGRISDVCMLLSFGADWSLKSKDGMTALELAEAENQLEAAQIIREHADNSQSNSQQGQQLLDKYMATINPEQVDVSLIQQLMRKICGDSEDGAILVFLPGWDDINKTRQRLLENPFFADSAKFDIICLHSMVPAGEQKKVFNRPPPGCRKIVLATNIAESAVTIDDVVYVIDSGRMKEKSYDPYNNVSTLQSSWVSKANAKQRQGRAGRCQPGICYHLYSRLRAASMPDFKVPEIKRMPVEELCLQVKILDPNCKTNDFLQKLLDPPVDQSIANALSILQDIGALTPQEELTELGEKFGHLPVHPLISKMLFFAVLVNCLDPALTLACAADYKEPFTMPMSPVERQKAAAAKLELASLCGGDSDHLAVVAAFECWKNAKGRGLSAEFCSQYFVSPSAMKMLDQMRSQLESELKRHGIIPNDISSCSQNSRDPGILRAVLAVGLYPMVGRLCPAFGNNRRTIVETASGAKVRVHSLSNNFNLSSKKYDESLLVFDEITRGDGGMHIRNCTVARDLPLLLISTEIAVAPTGSSDSDDSNEEEEDDEEVAANTNEEVAANTNEEGMDIHKEESRRGAKMMSSPENSVKLVVDRWLPFRTTALEVAQMYILRERLMASILFKVTHPREHLPPHLGASMHAIAGILSYDGHAGLSCPPESMVPKHSRTEMYDTGGWEEKPNSFLNSLFWSLSLKENKHPSHTNRNQQHNYNMAPTEAASIPRQQNYKQRNPKATNNTDSGKKKEKMFVNPTNRINQPEAASTGKPSKHKSANSSGSSNKKENMPSDQAYGNKQHNTVPREAAAPMAKNQSSKKTKTRSGNNSDSGKKKEQYIPKRQREDKAEQK</sequence>